<feature type="chain" id="PRO_1000090287" description="Holliday junction branch migration complex subunit RuvA">
    <location>
        <begin position="1"/>
        <end position="196"/>
    </location>
</feature>
<feature type="region of interest" description="Domain I" evidence="1">
    <location>
        <begin position="1"/>
        <end position="63"/>
    </location>
</feature>
<feature type="region of interest" description="Domain II" evidence="1">
    <location>
        <begin position="64"/>
        <end position="142"/>
    </location>
</feature>
<feature type="region of interest" description="Domain III" evidence="1">
    <location>
        <begin position="143"/>
        <end position="196"/>
    </location>
</feature>
<feature type="region of interest" description="Flexible linker" evidence="1">
    <location>
        <position position="143"/>
    </location>
</feature>
<comment type="function">
    <text evidence="1">The RuvA-RuvB-RuvC complex processes Holliday junction (HJ) DNA during genetic recombination and DNA repair, while the RuvA-RuvB complex plays an important role in the rescue of blocked DNA replication forks via replication fork reversal (RFR). RuvA specifically binds to HJ cruciform DNA, conferring on it an open structure. The RuvB hexamer acts as an ATP-dependent pump, pulling dsDNA into and through the RuvAB complex. HJ branch migration allows RuvC to scan DNA until it finds its consensus sequence, where it cleaves and resolves the cruciform DNA.</text>
</comment>
<comment type="subunit">
    <text evidence="1">Homotetramer. Forms an RuvA(8)-RuvB(12)-Holliday junction (HJ) complex. HJ DNA is sandwiched between 2 RuvA tetramers; dsDNA enters through RuvA and exits via RuvB. An RuvB hexamer assembles on each DNA strand where it exits the tetramer. Each RuvB hexamer is contacted by two RuvA subunits (via domain III) on 2 adjacent RuvB subunits; this complex drives branch migration. In the full resolvosome a probable DNA-RuvA(4)-RuvB(12)-RuvC(2) complex forms which resolves the HJ.</text>
</comment>
<comment type="subcellular location">
    <subcellularLocation>
        <location evidence="1">Cytoplasm</location>
    </subcellularLocation>
</comment>
<comment type="domain">
    <text evidence="1">Has three domains with a flexible linker between the domains II and III and assumes an 'L' shape. Domain III is highly mobile and contacts RuvB.</text>
</comment>
<comment type="similarity">
    <text evidence="1">Belongs to the RuvA family.</text>
</comment>
<gene>
    <name evidence="1" type="primary">ruvA</name>
    <name type="ordered locus">BRE_28</name>
</gene>
<protein>
    <recommendedName>
        <fullName evidence="1">Holliday junction branch migration complex subunit RuvA</fullName>
    </recommendedName>
</protein>
<proteinExistence type="inferred from homology"/>
<dbReference type="EMBL" id="CP000993">
    <property type="protein sequence ID" value="ACH94290.1"/>
    <property type="molecule type" value="Genomic_DNA"/>
</dbReference>
<dbReference type="RefSeq" id="WP_012538604.1">
    <property type="nucleotide sequence ID" value="NC_011244.1"/>
</dbReference>
<dbReference type="SMR" id="B5RQK6"/>
<dbReference type="KEGG" id="bre:BRE_28"/>
<dbReference type="HOGENOM" id="CLU_087936_2_0_12"/>
<dbReference type="Proteomes" id="UP000000612">
    <property type="component" value="Chromosome"/>
</dbReference>
<dbReference type="GO" id="GO:0005737">
    <property type="term" value="C:cytoplasm"/>
    <property type="evidence" value="ECO:0007669"/>
    <property type="project" value="UniProtKB-SubCell"/>
</dbReference>
<dbReference type="GO" id="GO:0048476">
    <property type="term" value="C:Holliday junction resolvase complex"/>
    <property type="evidence" value="ECO:0007669"/>
    <property type="project" value="UniProtKB-UniRule"/>
</dbReference>
<dbReference type="GO" id="GO:0005524">
    <property type="term" value="F:ATP binding"/>
    <property type="evidence" value="ECO:0007669"/>
    <property type="project" value="InterPro"/>
</dbReference>
<dbReference type="GO" id="GO:0000400">
    <property type="term" value="F:four-way junction DNA binding"/>
    <property type="evidence" value="ECO:0007669"/>
    <property type="project" value="UniProtKB-UniRule"/>
</dbReference>
<dbReference type="GO" id="GO:0009378">
    <property type="term" value="F:four-way junction helicase activity"/>
    <property type="evidence" value="ECO:0007669"/>
    <property type="project" value="InterPro"/>
</dbReference>
<dbReference type="GO" id="GO:0006310">
    <property type="term" value="P:DNA recombination"/>
    <property type="evidence" value="ECO:0007669"/>
    <property type="project" value="UniProtKB-UniRule"/>
</dbReference>
<dbReference type="GO" id="GO:0006281">
    <property type="term" value="P:DNA repair"/>
    <property type="evidence" value="ECO:0007669"/>
    <property type="project" value="UniProtKB-UniRule"/>
</dbReference>
<dbReference type="Gene3D" id="1.10.150.20">
    <property type="entry name" value="5' to 3' exonuclease, C-terminal subdomain"/>
    <property type="match status" value="1"/>
</dbReference>
<dbReference type="Gene3D" id="2.40.50.140">
    <property type="entry name" value="Nucleic acid-binding proteins"/>
    <property type="match status" value="1"/>
</dbReference>
<dbReference type="HAMAP" id="MF_00031">
    <property type="entry name" value="DNA_HJ_migration_RuvA"/>
    <property type="match status" value="1"/>
</dbReference>
<dbReference type="InterPro" id="IPR013849">
    <property type="entry name" value="DNA_helicase_Holl-junc_RuvA_I"/>
</dbReference>
<dbReference type="InterPro" id="IPR003583">
    <property type="entry name" value="Hlx-hairpin-Hlx_DNA-bd_motif"/>
</dbReference>
<dbReference type="InterPro" id="IPR012340">
    <property type="entry name" value="NA-bd_OB-fold"/>
</dbReference>
<dbReference type="InterPro" id="IPR000085">
    <property type="entry name" value="RuvA"/>
</dbReference>
<dbReference type="InterPro" id="IPR010994">
    <property type="entry name" value="RuvA_2-like"/>
</dbReference>
<dbReference type="NCBIfam" id="TIGR00084">
    <property type="entry name" value="ruvA"/>
    <property type="match status" value="1"/>
</dbReference>
<dbReference type="Pfam" id="PF14520">
    <property type="entry name" value="HHH_5"/>
    <property type="match status" value="1"/>
</dbReference>
<dbReference type="Pfam" id="PF01330">
    <property type="entry name" value="RuvA_N"/>
    <property type="match status" value="1"/>
</dbReference>
<dbReference type="SMART" id="SM00278">
    <property type="entry name" value="HhH1"/>
    <property type="match status" value="2"/>
</dbReference>
<dbReference type="SUPFAM" id="SSF50249">
    <property type="entry name" value="Nucleic acid-binding proteins"/>
    <property type="match status" value="1"/>
</dbReference>
<dbReference type="SUPFAM" id="SSF47781">
    <property type="entry name" value="RuvA domain 2-like"/>
    <property type="match status" value="1"/>
</dbReference>
<evidence type="ECO:0000255" key="1">
    <source>
        <dbReference type="HAMAP-Rule" id="MF_00031"/>
    </source>
</evidence>
<reference key="1">
    <citation type="journal article" date="2008" name="PLoS Genet.">
        <title>The genome of Borrelia recurrentis, the agent of deadly louse-borne relapsing fever, is a degraded subset of tick-borne Borrelia duttonii.</title>
        <authorList>
            <person name="Lescot M."/>
            <person name="Audic S."/>
            <person name="Robert C."/>
            <person name="Nguyen T.T."/>
            <person name="Blanc G."/>
            <person name="Cutler S.J."/>
            <person name="Wincker P."/>
            <person name="Couloux A."/>
            <person name="Claverie J.-M."/>
            <person name="Raoult D."/>
            <person name="Drancourt M."/>
        </authorList>
    </citation>
    <scope>NUCLEOTIDE SEQUENCE [LARGE SCALE GENOMIC DNA]</scope>
    <source>
        <strain>A1</strain>
    </source>
</reference>
<sequence length="196" mass="22487">MINKIYGKIVDKKESSIIILAFPFEFEILVSSFCKMELRLLEDVEILTYFHFRDDDVKLFGFLNISEREVFENLIGVDGIGPKAALKILSGIKYDAFRLAIAKEDINLISKVKGIGNKIAGKIFLKLRGKLVKGDESSSYMLKFKELEQSIVNMGFDRKLVVVAFREIMLSDKFLILKEAEQEQFLFTETLKRLSV</sequence>
<name>RUVA_BORRA</name>
<accession>B5RQK6</accession>
<keyword id="KW-0963">Cytoplasm</keyword>
<keyword id="KW-0227">DNA damage</keyword>
<keyword id="KW-0233">DNA recombination</keyword>
<keyword id="KW-0234">DNA repair</keyword>
<keyword id="KW-0238">DNA-binding</keyword>
<organism>
    <name type="scientific">Borrelia recurrentis (strain A1)</name>
    <dbReference type="NCBI Taxonomy" id="412418"/>
    <lineage>
        <taxon>Bacteria</taxon>
        <taxon>Pseudomonadati</taxon>
        <taxon>Spirochaetota</taxon>
        <taxon>Spirochaetia</taxon>
        <taxon>Spirochaetales</taxon>
        <taxon>Borreliaceae</taxon>
        <taxon>Borrelia</taxon>
    </lineage>
</organism>